<sequence>MAVSTQQLAEELQIFGLDYEDSLLEKLAELCVLYRQTEDGMVSELIAFCTSAGKTCLTVDILNSFEYEVLNKKLSKAWHSASKDSGHAGTRDIVSIQELIEAEEEEETLLSSYTTPSKGPLKRVSSTPETPLTKRSVAARSPRQLLSPSSFSPSATPSQKYTSRTNRGEVVTTFGSAQGLSWSGRGGSGSVSLKVVGDPEPLTGSYKAMFQQLMGVREVLTSKIEELGSELKEHHKIEAFTPLLVPAQEPVILLGQIGCDSNGKLNSKSVILEGDQEHSYGAQIPVDLSELKEYSLFPGQVVIMEGFNTTGRRLTATKLYEGVPLPFYQPTEEEGASEQTMVVVACGPYTTSDSITYDPLLDLIAIINRDQPDVCILFGPFLDAKHEQVENCKLTSPFEDVFKQCLRTVIEGTRSSGSHLVFVPSLRDVHHEPVYPQPPFTFSELSREDKKRVQFVSEPCSLSINGVMFGLTSTDLLFHIGAEEIFSSSGTSDRFSRVLKHILTQRSYYPLYPPHEDMAIDYENFYTYAQLPVTPDVFIVPSELRYFVKDIFGCVCVNPGRLTKGQVGGTFGRLYLRRQPKAMDGGGRQGLSVAAQVVRI</sequence>
<organism>
    <name type="scientific">Mus musculus</name>
    <name type="common">Mouse</name>
    <dbReference type="NCBI Taxonomy" id="10090"/>
    <lineage>
        <taxon>Eukaryota</taxon>
        <taxon>Metazoa</taxon>
        <taxon>Chordata</taxon>
        <taxon>Craniata</taxon>
        <taxon>Vertebrata</taxon>
        <taxon>Euteleostomi</taxon>
        <taxon>Mammalia</taxon>
        <taxon>Eutheria</taxon>
        <taxon>Euarchontoglires</taxon>
        <taxon>Glires</taxon>
        <taxon>Rodentia</taxon>
        <taxon>Myomorpha</taxon>
        <taxon>Muroidea</taxon>
        <taxon>Muridae</taxon>
        <taxon>Murinae</taxon>
        <taxon>Mus</taxon>
        <taxon>Mus</taxon>
    </lineage>
</organism>
<proteinExistence type="evidence at protein level"/>
<reference key="1">
    <citation type="journal article" date="1993" name="J. Biol. Chem.">
        <title>Molecular cloning of the cDNAs for the four subunits of mouse DNA polymerase alpha-primase complex and their gene expression during cell proliferation and the cell cycle.</title>
        <authorList>
            <person name="Miyazawa H."/>
            <person name="Izumi M."/>
            <person name="Tada S."/>
            <person name="Takada R."/>
            <person name="Masutani M."/>
            <person name="Ui M."/>
            <person name="Hanaoka F."/>
        </authorList>
    </citation>
    <scope>NUCLEOTIDE SEQUENCE [MRNA]</scope>
    <scope>PROTEIN SEQUENCE OF 84-102; 269-285 AND 394-403</scope>
</reference>
<reference key="2">
    <citation type="journal article" date="2005" name="Science">
        <title>The transcriptional landscape of the mammalian genome.</title>
        <authorList>
            <person name="Carninci P."/>
            <person name="Kasukawa T."/>
            <person name="Katayama S."/>
            <person name="Gough J."/>
            <person name="Frith M.C."/>
            <person name="Maeda N."/>
            <person name="Oyama R."/>
            <person name="Ravasi T."/>
            <person name="Lenhard B."/>
            <person name="Wells C."/>
            <person name="Kodzius R."/>
            <person name="Shimokawa K."/>
            <person name="Bajic V.B."/>
            <person name="Brenner S.E."/>
            <person name="Batalov S."/>
            <person name="Forrest A.R."/>
            <person name="Zavolan M."/>
            <person name="Davis M.J."/>
            <person name="Wilming L.G."/>
            <person name="Aidinis V."/>
            <person name="Allen J.E."/>
            <person name="Ambesi-Impiombato A."/>
            <person name="Apweiler R."/>
            <person name="Aturaliya R.N."/>
            <person name="Bailey T.L."/>
            <person name="Bansal M."/>
            <person name="Baxter L."/>
            <person name="Beisel K.W."/>
            <person name="Bersano T."/>
            <person name="Bono H."/>
            <person name="Chalk A.M."/>
            <person name="Chiu K.P."/>
            <person name="Choudhary V."/>
            <person name="Christoffels A."/>
            <person name="Clutterbuck D.R."/>
            <person name="Crowe M.L."/>
            <person name="Dalla E."/>
            <person name="Dalrymple B.P."/>
            <person name="de Bono B."/>
            <person name="Della Gatta G."/>
            <person name="di Bernardo D."/>
            <person name="Down T."/>
            <person name="Engstrom P."/>
            <person name="Fagiolini M."/>
            <person name="Faulkner G."/>
            <person name="Fletcher C.F."/>
            <person name="Fukushima T."/>
            <person name="Furuno M."/>
            <person name="Futaki S."/>
            <person name="Gariboldi M."/>
            <person name="Georgii-Hemming P."/>
            <person name="Gingeras T.R."/>
            <person name="Gojobori T."/>
            <person name="Green R.E."/>
            <person name="Gustincich S."/>
            <person name="Harbers M."/>
            <person name="Hayashi Y."/>
            <person name="Hensch T.K."/>
            <person name="Hirokawa N."/>
            <person name="Hill D."/>
            <person name="Huminiecki L."/>
            <person name="Iacono M."/>
            <person name="Ikeo K."/>
            <person name="Iwama A."/>
            <person name="Ishikawa T."/>
            <person name="Jakt M."/>
            <person name="Kanapin A."/>
            <person name="Katoh M."/>
            <person name="Kawasawa Y."/>
            <person name="Kelso J."/>
            <person name="Kitamura H."/>
            <person name="Kitano H."/>
            <person name="Kollias G."/>
            <person name="Krishnan S.P."/>
            <person name="Kruger A."/>
            <person name="Kummerfeld S.K."/>
            <person name="Kurochkin I.V."/>
            <person name="Lareau L.F."/>
            <person name="Lazarevic D."/>
            <person name="Lipovich L."/>
            <person name="Liu J."/>
            <person name="Liuni S."/>
            <person name="McWilliam S."/>
            <person name="Madan Babu M."/>
            <person name="Madera M."/>
            <person name="Marchionni L."/>
            <person name="Matsuda H."/>
            <person name="Matsuzawa S."/>
            <person name="Miki H."/>
            <person name="Mignone F."/>
            <person name="Miyake S."/>
            <person name="Morris K."/>
            <person name="Mottagui-Tabar S."/>
            <person name="Mulder N."/>
            <person name="Nakano N."/>
            <person name="Nakauchi H."/>
            <person name="Ng P."/>
            <person name="Nilsson R."/>
            <person name="Nishiguchi S."/>
            <person name="Nishikawa S."/>
            <person name="Nori F."/>
            <person name="Ohara O."/>
            <person name="Okazaki Y."/>
            <person name="Orlando V."/>
            <person name="Pang K.C."/>
            <person name="Pavan W.J."/>
            <person name="Pavesi G."/>
            <person name="Pesole G."/>
            <person name="Petrovsky N."/>
            <person name="Piazza S."/>
            <person name="Reed J."/>
            <person name="Reid J.F."/>
            <person name="Ring B.Z."/>
            <person name="Ringwald M."/>
            <person name="Rost B."/>
            <person name="Ruan Y."/>
            <person name="Salzberg S.L."/>
            <person name="Sandelin A."/>
            <person name="Schneider C."/>
            <person name="Schoenbach C."/>
            <person name="Sekiguchi K."/>
            <person name="Semple C.A."/>
            <person name="Seno S."/>
            <person name="Sessa L."/>
            <person name="Sheng Y."/>
            <person name="Shibata Y."/>
            <person name="Shimada H."/>
            <person name="Shimada K."/>
            <person name="Silva D."/>
            <person name="Sinclair B."/>
            <person name="Sperling S."/>
            <person name="Stupka E."/>
            <person name="Sugiura K."/>
            <person name="Sultana R."/>
            <person name="Takenaka Y."/>
            <person name="Taki K."/>
            <person name="Tammoja K."/>
            <person name="Tan S.L."/>
            <person name="Tang S."/>
            <person name="Taylor M.S."/>
            <person name="Tegner J."/>
            <person name="Teichmann S.A."/>
            <person name="Ueda H.R."/>
            <person name="van Nimwegen E."/>
            <person name="Verardo R."/>
            <person name="Wei C.L."/>
            <person name="Yagi K."/>
            <person name="Yamanishi H."/>
            <person name="Zabarovsky E."/>
            <person name="Zhu S."/>
            <person name="Zimmer A."/>
            <person name="Hide W."/>
            <person name="Bult C."/>
            <person name="Grimmond S.M."/>
            <person name="Teasdale R.D."/>
            <person name="Liu E.T."/>
            <person name="Brusic V."/>
            <person name="Quackenbush J."/>
            <person name="Wahlestedt C."/>
            <person name="Mattick J.S."/>
            <person name="Hume D.A."/>
            <person name="Kai C."/>
            <person name="Sasaki D."/>
            <person name="Tomaru Y."/>
            <person name="Fukuda S."/>
            <person name="Kanamori-Katayama M."/>
            <person name="Suzuki M."/>
            <person name="Aoki J."/>
            <person name="Arakawa T."/>
            <person name="Iida J."/>
            <person name="Imamura K."/>
            <person name="Itoh M."/>
            <person name="Kato T."/>
            <person name="Kawaji H."/>
            <person name="Kawagashira N."/>
            <person name="Kawashima T."/>
            <person name="Kojima M."/>
            <person name="Kondo S."/>
            <person name="Konno H."/>
            <person name="Nakano K."/>
            <person name="Ninomiya N."/>
            <person name="Nishio T."/>
            <person name="Okada M."/>
            <person name="Plessy C."/>
            <person name="Shibata K."/>
            <person name="Shiraki T."/>
            <person name="Suzuki S."/>
            <person name="Tagami M."/>
            <person name="Waki K."/>
            <person name="Watahiki A."/>
            <person name="Okamura-Oho Y."/>
            <person name="Suzuki H."/>
            <person name="Kawai J."/>
            <person name="Hayashizaki Y."/>
        </authorList>
    </citation>
    <scope>NUCLEOTIDE SEQUENCE [LARGE SCALE MRNA]</scope>
    <source>
        <strain>C57BL/6J</strain>
        <tissue>Bone marrow</tissue>
    </source>
</reference>
<reference key="3">
    <citation type="submission" date="2005-07" db="EMBL/GenBank/DDBJ databases">
        <authorList>
            <person name="Mural R.J."/>
            <person name="Adams M.D."/>
            <person name="Myers E.W."/>
            <person name="Smith H.O."/>
            <person name="Venter J.C."/>
        </authorList>
    </citation>
    <scope>NUCLEOTIDE SEQUENCE [LARGE SCALE GENOMIC DNA]</scope>
</reference>
<reference key="4">
    <citation type="journal article" date="2004" name="Genome Res.">
        <title>The status, quality, and expansion of the NIH full-length cDNA project: the Mammalian Gene Collection (MGC).</title>
        <authorList>
            <consortium name="The MGC Project Team"/>
        </authorList>
    </citation>
    <scope>NUCLEOTIDE SEQUENCE [LARGE SCALE MRNA]</scope>
    <source>
        <strain>C57BL/6J</strain>
        <strain>FVB/N-3</strain>
        <tissue>Mammary tumor</tissue>
    </source>
</reference>
<reference key="5">
    <citation type="journal article" date="2007" name="Proc. Natl. Acad. Sci. U.S.A.">
        <title>Large-scale phosphorylation analysis of mouse liver.</title>
        <authorList>
            <person name="Villen J."/>
            <person name="Beausoleil S.A."/>
            <person name="Gerber S.A."/>
            <person name="Gygi S.P."/>
        </authorList>
    </citation>
    <scope>PHOSPHORYLATION [LARGE SCALE ANALYSIS] AT THR-127 AND THR-130</scope>
    <scope>IDENTIFICATION BY MASS SPECTROMETRY [LARGE SCALE ANALYSIS]</scope>
    <source>
        <tissue>Liver</tissue>
    </source>
</reference>
<reference key="6">
    <citation type="journal article" date="2010" name="Cell">
        <title>A tissue-specific atlas of mouse protein phosphorylation and expression.</title>
        <authorList>
            <person name="Huttlin E.L."/>
            <person name="Jedrychowski M.P."/>
            <person name="Elias J.E."/>
            <person name="Goswami T."/>
            <person name="Rad R."/>
            <person name="Beausoleil S.A."/>
            <person name="Villen J."/>
            <person name="Haas W."/>
            <person name="Sowa M.E."/>
            <person name="Gygi S.P."/>
        </authorList>
    </citation>
    <scope>PHOSPHORYLATION [LARGE SCALE ANALYSIS] AT THR-130</scope>
    <scope>IDENTIFICATION BY MASS SPECTROMETRY [LARGE SCALE ANALYSIS]</scope>
    <source>
        <tissue>Lung</tissue>
        <tissue>Spleen</tissue>
    </source>
</reference>
<keyword id="KW-0903">Direct protein sequencing</keyword>
<keyword id="KW-0235">DNA replication</keyword>
<keyword id="KW-0539">Nucleus</keyword>
<keyword id="KW-0597">Phosphoprotein</keyword>
<keyword id="KW-1185">Reference proteome</keyword>
<feature type="chain" id="PRO_0000194036" description="DNA polymerase alpha subunit B">
    <location>
        <begin position="1"/>
        <end position="600"/>
    </location>
</feature>
<feature type="region of interest" description="Disordered" evidence="5">
    <location>
        <begin position="107"/>
        <end position="165"/>
    </location>
</feature>
<feature type="compositionally biased region" description="Low complexity" evidence="5">
    <location>
        <begin position="139"/>
        <end position="159"/>
    </location>
</feature>
<feature type="modified residue" description="Phosphoserine" evidence="4">
    <location>
        <position position="126"/>
    </location>
</feature>
<feature type="modified residue" description="Phosphothreonine" evidence="7">
    <location>
        <position position="127"/>
    </location>
</feature>
<feature type="modified residue" description="Phosphothreonine" evidence="7 8">
    <location>
        <position position="130"/>
    </location>
</feature>
<feature type="modified residue" description="Phosphoserine" evidence="4">
    <location>
        <position position="141"/>
    </location>
</feature>
<feature type="modified residue" description="Phosphoserine" evidence="4">
    <location>
        <position position="147"/>
    </location>
</feature>
<feature type="modified residue" description="Phosphoserine" evidence="4">
    <location>
        <position position="152"/>
    </location>
</feature>
<feature type="modified residue" description="Phosphoserine" evidence="4">
    <location>
        <position position="154"/>
    </location>
</feature>
<feature type="sequence conflict" description="In Ref. 1; BAA02746." evidence="6" ref="1">
    <original>C</original>
    <variation>R</variation>
    <location>
        <position position="346"/>
    </location>
</feature>
<name>DPOA2_MOUSE</name>
<gene>
    <name type="primary">Pola2</name>
</gene>
<comment type="function">
    <text evidence="2 3 4">Accessory subunit of the DNA polymerase alpha complex (also known as the alpha DNA polymerase-primase complex) which plays an essential role in the initiation of DNA synthesis (By similarity). During the S phase of the cell cycle, the DNA polymerase alpha complex (composed of a catalytic subunit POLA1, an accessory subunit POLA2 and two primase subunits, the catalytic subunit PRIM1 and the regulatory subunit PRIM2) is recruited to DNA at the replicative forks via direct interactions with MCM10 and WDHD1 (By similarity). The primase subunit of the polymerase alpha complex initiates DNA synthesis by oligomerising short RNA primers on both leading and lagging strands. These primers are initially extended by the polymerase alpha catalytic subunit and subsequently transferred to polymerase delta and polymerase epsilon for processive synthesis on the lagging and leading strand, respectively (By similarity).</text>
</comment>
<comment type="subunit">
    <text evidence="3 4">Component of the alpha DNA polymerase complex (also known as the alpha DNA polymerase-primase complex) consisting of four subunits: the catalytic subunit POLA1, the regulatory subunit POLA2, and the primase complex subunits PRIM1 and PRIM2 respectively (By similarity). Within the complex, POLA1 directly interacts with PRIM2 (By similarity).</text>
</comment>
<comment type="interaction">
    <interactant intactId="EBI-848759">
        <id>P33611</id>
    </interactant>
    <interactant intactId="EBI-688051">
        <id>P33609</id>
        <label>Pola1</label>
    </interactant>
    <organismsDiffer>false</organismsDiffer>
    <experiments>5</experiments>
</comment>
<comment type="subcellular location">
    <subcellularLocation>
        <location>Nucleus</location>
    </subcellularLocation>
</comment>
<comment type="PTM">
    <text evidence="1">Phosphorylated in a cell cycle-dependent manner, in G2/M phase.</text>
</comment>
<comment type="similarity">
    <text evidence="6">Belongs to the DNA polymerase alpha subunit B family.</text>
</comment>
<evidence type="ECO:0000250" key="1"/>
<evidence type="ECO:0000250" key="2">
    <source>
        <dbReference type="UniProtKB" id="P09884"/>
    </source>
</evidence>
<evidence type="ECO:0000250" key="3">
    <source>
        <dbReference type="UniProtKB" id="P20664"/>
    </source>
</evidence>
<evidence type="ECO:0000250" key="4">
    <source>
        <dbReference type="UniProtKB" id="Q14181"/>
    </source>
</evidence>
<evidence type="ECO:0000256" key="5">
    <source>
        <dbReference type="SAM" id="MobiDB-lite"/>
    </source>
</evidence>
<evidence type="ECO:0000305" key="6"/>
<evidence type="ECO:0007744" key="7">
    <source>
    </source>
</evidence>
<evidence type="ECO:0007744" key="8">
    <source>
    </source>
</evidence>
<accession>P33611</accession>
<accession>Q8VDR3</accession>
<protein>
    <recommendedName>
        <fullName>DNA polymerase alpha subunit B</fullName>
    </recommendedName>
    <alternativeName>
        <fullName>DNA polymerase alpha 70 kDa subunit</fullName>
    </alternativeName>
</protein>
<dbReference type="EMBL" id="D13546">
    <property type="protein sequence ID" value="BAA02746.1"/>
    <property type="molecule type" value="mRNA"/>
</dbReference>
<dbReference type="EMBL" id="AK150099">
    <property type="protein sequence ID" value="BAE29306.1"/>
    <property type="molecule type" value="mRNA"/>
</dbReference>
<dbReference type="EMBL" id="CH466612">
    <property type="protein sequence ID" value="EDL33190.1"/>
    <property type="molecule type" value="Genomic_DNA"/>
</dbReference>
<dbReference type="EMBL" id="BC021424">
    <property type="protein sequence ID" value="AAH21424.1"/>
    <property type="molecule type" value="mRNA"/>
</dbReference>
<dbReference type="EMBL" id="BC064795">
    <property type="protein sequence ID" value="AAH64795.1"/>
    <property type="molecule type" value="mRNA"/>
</dbReference>
<dbReference type="CCDS" id="CCDS29485.1"/>
<dbReference type="PIR" id="B46642">
    <property type="entry name" value="B46642"/>
</dbReference>
<dbReference type="RefSeq" id="NP_032919.2">
    <property type="nucleotide sequence ID" value="NM_008893.3"/>
</dbReference>
<dbReference type="SMR" id="P33611"/>
<dbReference type="BioGRID" id="202288">
    <property type="interactions" value="4"/>
</dbReference>
<dbReference type="ComplexPortal" id="CPX-2088">
    <property type="entry name" value="DNA polymerase alpha:primase complex"/>
</dbReference>
<dbReference type="CORUM" id="P33611"/>
<dbReference type="FunCoup" id="P33611">
    <property type="interactions" value="2719"/>
</dbReference>
<dbReference type="IntAct" id="P33611">
    <property type="interactions" value="4"/>
</dbReference>
<dbReference type="MINT" id="P33611"/>
<dbReference type="STRING" id="10090.ENSMUSP00000025752"/>
<dbReference type="GlyGen" id="P33611">
    <property type="glycosylation" value="1 site"/>
</dbReference>
<dbReference type="iPTMnet" id="P33611"/>
<dbReference type="PhosphoSitePlus" id="P33611"/>
<dbReference type="jPOST" id="P33611"/>
<dbReference type="PaxDb" id="10090-ENSMUSP00000025752"/>
<dbReference type="PeptideAtlas" id="P33611"/>
<dbReference type="ProteomicsDB" id="277386"/>
<dbReference type="Pumba" id="P33611"/>
<dbReference type="DNASU" id="18969"/>
<dbReference type="Ensembl" id="ENSMUST00000025752.15">
    <property type="protein sequence ID" value="ENSMUSP00000025752.8"/>
    <property type="gene ID" value="ENSMUSG00000024833.16"/>
</dbReference>
<dbReference type="GeneID" id="18969"/>
<dbReference type="KEGG" id="mmu:18969"/>
<dbReference type="UCSC" id="uc008ggb.2">
    <property type="organism name" value="mouse"/>
</dbReference>
<dbReference type="AGR" id="MGI:99690"/>
<dbReference type="CTD" id="23649"/>
<dbReference type="MGI" id="MGI:99690">
    <property type="gene designation" value="Pola2"/>
</dbReference>
<dbReference type="VEuPathDB" id="HostDB:ENSMUSG00000024833"/>
<dbReference type="eggNOG" id="KOG1625">
    <property type="taxonomic scope" value="Eukaryota"/>
</dbReference>
<dbReference type="GeneTree" id="ENSGT00390000016784"/>
<dbReference type="HOGENOM" id="CLU_014923_3_1_1"/>
<dbReference type="InParanoid" id="P33611"/>
<dbReference type="OMA" id="PFLDIEH"/>
<dbReference type="OrthoDB" id="336885at2759"/>
<dbReference type="PhylomeDB" id="P33611"/>
<dbReference type="TreeFam" id="TF314249"/>
<dbReference type="Reactome" id="R-MMU-113501">
    <property type="pathway name" value="Inhibition of replication initiation of damaged DNA by RB1/E2F1"/>
</dbReference>
<dbReference type="Reactome" id="R-MMU-174411">
    <property type="pathway name" value="Polymerase switching on the C-strand of the telomere"/>
</dbReference>
<dbReference type="Reactome" id="R-MMU-174430">
    <property type="pathway name" value="Telomere C-strand synthesis initiation"/>
</dbReference>
<dbReference type="Reactome" id="R-MMU-68952">
    <property type="pathway name" value="DNA replication initiation"/>
</dbReference>
<dbReference type="Reactome" id="R-MMU-68962">
    <property type="pathway name" value="Activation of the pre-replicative complex"/>
</dbReference>
<dbReference type="Reactome" id="R-MMU-69091">
    <property type="pathway name" value="Polymerase switching"/>
</dbReference>
<dbReference type="Reactome" id="R-MMU-69166">
    <property type="pathway name" value="Removal of the Flap Intermediate"/>
</dbReference>
<dbReference type="Reactome" id="R-MMU-69183">
    <property type="pathway name" value="Processive synthesis on the lagging strand"/>
</dbReference>
<dbReference type="BioGRID-ORCS" id="18969">
    <property type="hits" value="25 hits in 80 CRISPR screens"/>
</dbReference>
<dbReference type="ChiTaRS" id="Pola2">
    <property type="organism name" value="mouse"/>
</dbReference>
<dbReference type="PRO" id="PR:P33611"/>
<dbReference type="Proteomes" id="UP000000589">
    <property type="component" value="Chromosome 19"/>
</dbReference>
<dbReference type="RNAct" id="P33611">
    <property type="molecule type" value="protein"/>
</dbReference>
<dbReference type="Bgee" id="ENSMUSG00000024833">
    <property type="expression patterns" value="Expressed in cerebellum ventricular layer and 251 other cell types or tissues"/>
</dbReference>
<dbReference type="ExpressionAtlas" id="P33611">
    <property type="expression patterns" value="baseline and differential"/>
</dbReference>
<dbReference type="GO" id="GO:0005658">
    <property type="term" value="C:alpha DNA polymerase:primase complex"/>
    <property type="evidence" value="ECO:0000314"/>
    <property type="project" value="UniProtKB"/>
</dbReference>
<dbReference type="GO" id="GO:0036064">
    <property type="term" value="C:ciliary basal body"/>
    <property type="evidence" value="ECO:0007669"/>
    <property type="project" value="Ensembl"/>
</dbReference>
<dbReference type="GO" id="GO:0005829">
    <property type="term" value="C:cytosol"/>
    <property type="evidence" value="ECO:0007669"/>
    <property type="project" value="Ensembl"/>
</dbReference>
<dbReference type="GO" id="GO:0005654">
    <property type="term" value="C:nucleoplasm"/>
    <property type="evidence" value="ECO:0007669"/>
    <property type="project" value="Ensembl"/>
</dbReference>
<dbReference type="GO" id="GO:0005634">
    <property type="term" value="C:nucleus"/>
    <property type="evidence" value="ECO:0000314"/>
    <property type="project" value="MGI"/>
</dbReference>
<dbReference type="GO" id="GO:0003677">
    <property type="term" value="F:DNA binding"/>
    <property type="evidence" value="ECO:0007669"/>
    <property type="project" value="InterPro"/>
</dbReference>
<dbReference type="GO" id="GO:0006260">
    <property type="term" value="P:DNA replication"/>
    <property type="evidence" value="ECO:0000314"/>
    <property type="project" value="MGI"/>
</dbReference>
<dbReference type="GO" id="GO:0006270">
    <property type="term" value="P:DNA replication initiation"/>
    <property type="evidence" value="ECO:0000314"/>
    <property type="project" value="ComplexPortal"/>
</dbReference>
<dbReference type="GO" id="GO:0006269">
    <property type="term" value="P:DNA replication, synthesis of primer"/>
    <property type="evidence" value="ECO:0000314"/>
    <property type="project" value="UniProtKB"/>
</dbReference>
<dbReference type="GO" id="GO:0006606">
    <property type="term" value="P:protein import into nucleus"/>
    <property type="evidence" value="ECO:0000314"/>
    <property type="project" value="MGI"/>
</dbReference>
<dbReference type="FunFam" id="1.10.8.530:FF:000001">
    <property type="entry name" value="DNA polymerase alpha subunit B"/>
    <property type="match status" value="1"/>
</dbReference>
<dbReference type="FunFam" id="3.60.21.60:FF:000002">
    <property type="entry name" value="DNA polymerase alpha subunit B"/>
    <property type="match status" value="1"/>
</dbReference>
<dbReference type="FunFam" id="3.60.21.60:FF:000003">
    <property type="entry name" value="DNA polymerase alpha subunit B"/>
    <property type="match status" value="1"/>
</dbReference>
<dbReference type="Gene3D" id="3.60.21.60">
    <property type="match status" value="2"/>
</dbReference>
<dbReference type="Gene3D" id="1.10.8.530">
    <property type="entry name" value="DNA polymerase alpha-primase, subunit B, N-terminal domain"/>
    <property type="match status" value="1"/>
</dbReference>
<dbReference type="InterPro" id="IPR007185">
    <property type="entry name" value="DNA_pol_a/d/e_bsu"/>
</dbReference>
<dbReference type="InterPro" id="IPR043034">
    <property type="entry name" value="DNA_pol_alpha_B_N_sf"/>
</dbReference>
<dbReference type="InterPro" id="IPR016722">
    <property type="entry name" value="DNA_pol_alpha_bsu"/>
</dbReference>
<dbReference type="InterPro" id="IPR054300">
    <property type="entry name" value="DPOA2_OB"/>
</dbReference>
<dbReference type="InterPro" id="IPR013627">
    <property type="entry name" value="Pol_alpha_B_N"/>
</dbReference>
<dbReference type="PANTHER" id="PTHR23061">
    <property type="entry name" value="DNA POLYMERASE 2 ALPHA 70 KDA SUBUNIT"/>
    <property type="match status" value="1"/>
</dbReference>
<dbReference type="PANTHER" id="PTHR23061:SF12">
    <property type="entry name" value="DNA POLYMERASE ALPHA SUBUNIT B"/>
    <property type="match status" value="1"/>
</dbReference>
<dbReference type="Pfam" id="PF04042">
    <property type="entry name" value="DNA_pol_E_B"/>
    <property type="match status" value="1"/>
</dbReference>
<dbReference type="Pfam" id="PF22062">
    <property type="entry name" value="DPOA2_OB"/>
    <property type="match status" value="1"/>
</dbReference>
<dbReference type="Pfam" id="PF08418">
    <property type="entry name" value="Pol_alpha_B_N"/>
    <property type="match status" value="1"/>
</dbReference>
<dbReference type="PIRSF" id="PIRSF018300">
    <property type="entry name" value="DNA_pol_alph_2"/>
    <property type="match status" value="1"/>
</dbReference>